<name>TETN_BOVIN</name>
<gene>
    <name type="primary">CLEC3B</name>
</gene>
<dbReference type="EMBL" id="BC112525">
    <property type="protein sequence ID" value="AAI12526.1"/>
    <property type="molecule type" value="mRNA"/>
</dbReference>
<dbReference type="RefSeq" id="NP_001039677.1">
    <property type="nucleotide sequence ID" value="NM_001046212.1"/>
</dbReference>
<dbReference type="SMR" id="Q2KIS7"/>
<dbReference type="FunCoup" id="Q2KIS7">
    <property type="interactions" value="166"/>
</dbReference>
<dbReference type="STRING" id="9913.ENSBTAP00000024391"/>
<dbReference type="PaxDb" id="9913-ENSBTAP00000024391"/>
<dbReference type="PeptideAtlas" id="Q2KIS7"/>
<dbReference type="GeneID" id="515783"/>
<dbReference type="KEGG" id="bta:515783"/>
<dbReference type="CTD" id="7123"/>
<dbReference type="eggNOG" id="KOG4297">
    <property type="taxonomic scope" value="Eukaryota"/>
</dbReference>
<dbReference type="HOGENOM" id="CLU_049894_6_1_1"/>
<dbReference type="InParanoid" id="Q2KIS7"/>
<dbReference type="OrthoDB" id="6366227at2759"/>
<dbReference type="TreeFam" id="TF330481"/>
<dbReference type="Proteomes" id="UP000009136">
    <property type="component" value="Unplaced"/>
</dbReference>
<dbReference type="GO" id="GO:0005737">
    <property type="term" value="C:cytoplasm"/>
    <property type="evidence" value="ECO:0000250"/>
    <property type="project" value="UniProtKB"/>
</dbReference>
<dbReference type="GO" id="GO:0005615">
    <property type="term" value="C:extracellular space"/>
    <property type="evidence" value="ECO:0000250"/>
    <property type="project" value="UniProtKB"/>
</dbReference>
<dbReference type="GO" id="GO:0001652">
    <property type="term" value="C:granular component"/>
    <property type="evidence" value="ECO:0000250"/>
    <property type="project" value="UniProtKB"/>
</dbReference>
<dbReference type="GO" id="GO:0005509">
    <property type="term" value="F:calcium ion binding"/>
    <property type="evidence" value="ECO:0000250"/>
    <property type="project" value="UniProtKB"/>
</dbReference>
<dbReference type="GO" id="GO:0030246">
    <property type="term" value="F:carbohydrate binding"/>
    <property type="evidence" value="ECO:0007669"/>
    <property type="project" value="UniProtKB-KW"/>
</dbReference>
<dbReference type="GO" id="GO:0008201">
    <property type="term" value="F:heparin binding"/>
    <property type="evidence" value="ECO:0000250"/>
    <property type="project" value="UniProtKB"/>
</dbReference>
<dbReference type="GO" id="GO:0030282">
    <property type="term" value="P:bone mineralization"/>
    <property type="evidence" value="ECO:0000270"/>
    <property type="project" value="UniProtKB"/>
</dbReference>
<dbReference type="GO" id="GO:0001503">
    <property type="term" value="P:ossification"/>
    <property type="evidence" value="ECO:0000318"/>
    <property type="project" value="GO_Central"/>
</dbReference>
<dbReference type="GO" id="GO:0010756">
    <property type="term" value="P:positive regulation of plasminogen activation"/>
    <property type="evidence" value="ECO:0000250"/>
    <property type="project" value="UniProtKB"/>
</dbReference>
<dbReference type="CDD" id="cd03596">
    <property type="entry name" value="CLECT_tetranectin_like"/>
    <property type="match status" value="1"/>
</dbReference>
<dbReference type="FunFam" id="3.10.100.10:FF:000010">
    <property type="entry name" value="C-type lectin domain family 3 member A"/>
    <property type="match status" value="1"/>
</dbReference>
<dbReference type="Gene3D" id="3.10.100.10">
    <property type="entry name" value="Mannose-Binding Protein A, subunit A"/>
    <property type="match status" value="1"/>
</dbReference>
<dbReference type="InterPro" id="IPR001304">
    <property type="entry name" value="C-type_lectin-like"/>
</dbReference>
<dbReference type="InterPro" id="IPR016186">
    <property type="entry name" value="C-type_lectin-like/link_sf"/>
</dbReference>
<dbReference type="InterPro" id="IPR018378">
    <property type="entry name" value="C-type_lectin_CS"/>
</dbReference>
<dbReference type="InterPro" id="IPR051663">
    <property type="entry name" value="CLec_Tetranectin-domain"/>
</dbReference>
<dbReference type="InterPro" id="IPR016187">
    <property type="entry name" value="CTDL_fold"/>
</dbReference>
<dbReference type="PANTHER" id="PTHR22799:SF3">
    <property type="entry name" value="TETRANECTIN"/>
    <property type="match status" value="1"/>
</dbReference>
<dbReference type="PANTHER" id="PTHR22799">
    <property type="entry name" value="TETRANECTIN-RELATED"/>
    <property type="match status" value="1"/>
</dbReference>
<dbReference type="Pfam" id="PF00059">
    <property type="entry name" value="Lectin_C"/>
    <property type="match status" value="1"/>
</dbReference>
<dbReference type="PRINTS" id="PR01504">
    <property type="entry name" value="PNCREATITSAP"/>
</dbReference>
<dbReference type="SMART" id="SM00034">
    <property type="entry name" value="CLECT"/>
    <property type="match status" value="1"/>
</dbReference>
<dbReference type="SUPFAM" id="SSF56436">
    <property type="entry name" value="C-type lectin-like"/>
    <property type="match status" value="1"/>
</dbReference>
<dbReference type="SUPFAM" id="SSF57944">
    <property type="entry name" value="Triple coiled coil domain of C-type lectins"/>
    <property type="match status" value="1"/>
</dbReference>
<dbReference type="PROSITE" id="PS00615">
    <property type="entry name" value="C_TYPE_LECTIN_1"/>
    <property type="match status" value="1"/>
</dbReference>
<dbReference type="PROSITE" id="PS50041">
    <property type="entry name" value="C_TYPE_LECTIN_2"/>
    <property type="match status" value="1"/>
</dbReference>
<organism>
    <name type="scientific">Bos taurus</name>
    <name type="common">Bovine</name>
    <dbReference type="NCBI Taxonomy" id="9913"/>
    <lineage>
        <taxon>Eukaryota</taxon>
        <taxon>Metazoa</taxon>
        <taxon>Chordata</taxon>
        <taxon>Craniata</taxon>
        <taxon>Vertebrata</taxon>
        <taxon>Euteleostomi</taxon>
        <taxon>Mammalia</taxon>
        <taxon>Eutheria</taxon>
        <taxon>Laurasiatheria</taxon>
        <taxon>Artiodactyla</taxon>
        <taxon>Ruminantia</taxon>
        <taxon>Pecora</taxon>
        <taxon>Bovidae</taxon>
        <taxon>Bovinae</taxon>
        <taxon>Bos</taxon>
    </lineage>
</organism>
<evidence type="ECO:0000250" key="1"/>
<evidence type="ECO:0000250" key="2">
    <source>
        <dbReference type="UniProtKB" id="P05452"/>
    </source>
</evidence>
<evidence type="ECO:0000255" key="3">
    <source>
        <dbReference type="PROSITE-ProRule" id="PRU00040"/>
    </source>
</evidence>
<accession>Q2KIS7</accession>
<feature type="signal peptide" evidence="1">
    <location>
        <begin position="1"/>
        <end position="21"/>
    </location>
</feature>
<feature type="chain" id="PRO_0000240304" description="Tetranectin">
    <location>
        <begin position="22"/>
        <end position="202"/>
    </location>
</feature>
<feature type="domain" description="C-type lectin" evidence="3">
    <location>
        <begin position="77"/>
        <end position="198"/>
    </location>
</feature>
<feature type="disulfide bond" evidence="3">
    <location>
        <begin position="71"/>
        <end position="81"/>
    </location>
</feature>
<feature type="disulfide bond" evidence="3">
    <location>
        <begin position="98"/>
        <end position="197"/>
    </location>
</feature>
<feature type="disulfide bond" evidence="3">
    <location>
        <begin position="173"/>
        <end position="189"/>
    </location>
</feature>
<protein>
    <recommendedName>
        <fullName>Tetranectin</fullName>
        <shortName>TN</shortName>
    </recommendedName>
    <alternativeName>
        <fullName>C-type lectin domain family 3 member B</fullName>
    </alternativeName>
</protein>
<proteinExistence type="evidence at transcript level"/>
<comment type="function">
    <text evidence="1 2">Tetranectin binds to plasminogen and to isolated kringle 4. May be involved in the packaging of molecules destined for exocytosis (By similarity). Plays a role in retinal function (By similarity).</text>
</comment>
<comment type="subunit">
    <text evidence="1">Homotrimer.</text>
</comment>
<comment type="subcellular location">
    <subcellularLocation>
        <location evidence="1">Secreted</location>
    </subcellularLocation>
</comment>
<sequence>MELWGPCVLLCLFSLLTQVTAETPTPKAKKAANAKKDAVSPKMLEELKTQLDSLAQEVALLKEQQALQTVCLKGTKVHMKCFLAFVQAKTFHEASEDCISRGGTLGTPQTGSENDALYEYLRQSVGSEAEVWLGFNDMASEGSWVDMTGGHIAYKNWETEITAQPDGGKVENCATLSGAANGKWFDKRCRDKLPYVCQFAIV</sequence>
<keyword id="KW-1015">Disulfide bond</keyword>
<keyword id="KW-0430">Lectin</keyword>
<keyword id="KW-1185">Reference proteome</keyword>
<keyword id="KW-0964">Secreted</keyword>
<keyword id="KW-0732">Signal</keyword>
<reference key="1">
    <citation type="submission" date="2006-01" db="EMBL/GenBank/DDBJ databases">
        <authorList>
            <consortium name="NIH - Mammalian Gene Collection (MGC) project"/>
        </authorList>
    </citation>
    <scope>NUCLEOTIDE SEQUENCE [LARGE SCALE MRNA]</scope>
    <source>
        <strain>Hereford</strain>
        <tissue>Testis</tissue>
    </source>
</reference>